<gene>
    <name type="primary">Npy4r</name>
    <name type="synonym">Ppyr1</name>
</gene>
<organism>
    <name type="scientific">Mus musculus</name>
    <name type="common">Mouse</name>
    <dbReference type="NCBI Taxonomy" id="10090"/>
    <lineage>
        <taxon>Eukaryota</taxon>
        <taxon>Metazoa</taxon>
        <taxon>Chordata</taxon>
        <taxon>Craniata</taxon>
        <taxon>Vertebrata</taxon>
        <taxon>Euteleostomi</taxon>
        <taxon>Mammalia</taxon>
        <taxon>Eutheria</taxon>
        <taxon>Euarchontoglires</taxon>
        <taxon>Glires</taxon>
        <taxon>Rodentia</taxon>
        <taxon>Myomorpha</taxon>
        <taxon>Muroidea</taxon>
        <taxon>Muridae</taxon>
        <taxon>Murinae</taxon>
        <taxon>Mus</taxon>
        <taxon>Mus</taxon>
    </lineage>
</organism>
<keyword id="KW-1003">Cell membrane</keyword>
<keyword id="KW-1015">Disulfide bond</keyword>
<keyword id="KW-0297">G-protein coupled receptor</keyword>
<keyword id="KW-0325">Glycoprotein</keyword>
<keyword id="KW-0449">Lipoprotein</keyword>
<keyword id="KW-0472">Membrane</keyword>
<keyword id="KW-0564">Palmitate</keyword>
<keyword id="KW-0675">Receptor</keyword>
<keyword id="KW-1185">Reference proteome</keyword>
<keyword id="KW-0807">Transducer</keyword>
<keyword id="KW-0812">Transmembrane</keyword>
<keyword id="KW-1133">Transmembrane helix</keyword>
<reference key="1">
    <citation type="journal article" date="1996" name="FEBS Lett.">
        <title>Cloning and characterization of a novel receptor to pancreatic polypeptide, a member of the neuropeptide Y receptor family.</title>
        <authorList>
            <person name="Gregor P."/>
            <person name="Millham M.L."/>
            <person name="Feng Y."/>
            <person name="Decarr L.B."/>
            <person name="McCaleb M.L."/>
            <person name="Cornfield L.J."/>
        </authorList>
    </citation>
    <scope>NUCLEOTIDE SEQUENCE [GENOMIC DNA]</scope>
    <scope>FUNCTION</scope>
    <scope>SUBCELLULAR LOCATION</scope>
    <scope>TISSUE SPECIFICITY</scope>
    <source>
        <strain>129/Sv</strain>
    </source>
</reference>
<reference key="2">
    <citation type="journal article" date="2005" name="Science">
        <title>The transcriptional landscape of the mammalian genome.</title>
        <authorList>
            <person name="Carninci P."/>
            <person name="Kasukawa T."/>
            <person name="Katayama S."/>
            <person name="Gough J."/>
            <person name="Frith M.C."/>
            <person name="Maeda N."/>
            <person name="Oyama R."/>
            <person name="Ravasi T."/>
            <person name="Lenhard B."/>
            <person name="Wells C."/>
            <person name="Kodzius R."/>
            <person name="Shimokawa K."/>
            <person name="Bajic V.B."/>
            <person name="Brenner S.E."/>
            <person name="Batalov S."/>
            <person name="Forrest A.R."/>
            <person name="Zavolan M."/>
            <person name="Davis M.J."/>
            <person name="Wilming L.G."/>
            <person name="Aidinis V."/>
            <person name="Allen J.E."/>
            <person name="Ambesi-Impiombato A."/>
            <person name="Apweiler R."/>
            <person name="Aturaliya R.N."/>
            <person name="Bailey T.L."/>
            <person name="Bansal M."/>
            <person name="Baxter L."/>
            <person name="Beisel K.W."/>
            <person name="Bersano T."/>
            <person name="Bono H."/>
            <person name="Chalk A.M."/>
            <person name="Chiu K.P."/>
            <person name="Choudhary V."/>
            <person name="Christoffels A."/>
            <person name="Clutterbuck D.R."/>
            <person name="Crowe M.L."/>
            <person name="Dalla E."/>
            <person name="Dalrymple B.P."/>
            <person name="de Bono B."/>
            <person name="Della Gatta G."/>
            <person name="di Bernardo D."/>
            <person name="Down T."/>
            <person name="Engstrom P."/>
            <person name="Fagiolini M."/>
            <person name="Faulkner G."/>
            <person name="Fletcher C.F."/>
            <person name="Fukushima T."/>
            <person name="Furuno M."/>
            <person name="Futaki S."/>
            <person name="Gariboldi M."/>
            <person name="Georgii-Hemming P."/>
            <person name="Gingeras T.R."/>
            <person name="Gojobori T."/>
            <person name="Green R.E."/>
            <person name="Gustincich S."/>
            <person name="Harbers M."/>
            <person name="Hayashi Y."/>
            <person name="Hensch T.K."/>
            <person name="Hirokawa N."/>
            <person name="Hill D."/>
            <person name="Huminiecki L."/>
            <person name="Iacono M."/>
            <person name="Ikeo K."/>
            <person name="Iwama A."/>
            <person name="Ishikawa T."/>
            <person name="Jakt M."/>
            <person name="Kanapin A."/>
            <person name="Katoh M."/>
            <person name="Kawasawa Y."/>
            <person name="Kelso J."/>
            <person name="Kitamura H."/>
            <person name="Kitano H."/>
            <person name="Kollias G."/>
            <person name="Krishnan S.P."/>
            <person name="Kruger A."/>
            <person name="Kummerfeld S.K."/>
            <person name="Kurochkin I.V."/>
            <person name="Lareau L.F."/>
            <person name="Lazarevic D."/>
            <person name="Lipovich L."/>
            <person name="Liu J."/>
            <person name="Liuni S."/>
            <person name="McWilliam S."/>
            <person name="Madan Babu M."/>
            <person name="Madera M."/>
            <person name="Marchionni L."/>
            <person name="Matsuda H."/>
            <person name="Matsuzawa S."/>
            <person name="Miki H."/>
            <person name="Mignone F."/>
            <person name="Miyake S."/>
            <person name="Morris K."/>
            <person name="Mottagui-Tabar S."/>
            <person name="Mulder N."/>
            <person name="Nakano N."/>
            <person name="Nakauchi H."/>
            <person name="Ng P."/>
            <person name="Nilsson R."/>
            <person name="Nishiguchi S."/>
            <person name="Nishikawa S."/>
            <person name="Nori F."/>
            <person name="Ohara O."/>
            <person name="Okazaki Y."/>
            <person name="Orlando V."/>
            <person name="Pang K.C."/>
            <person name="Pavan W.J."/>
            <person name="Pavesi G."/>
            <person name="Pesole G."/>
            <person name="Petrovsky N."/>
            <person name="Piazza S."/>
            <person name="Reed J."/>
            <person name="Reid J.F."/>
            <person name="Ring B.Z."/>
            <person name="Ringwald M."/>
            <person name="Rost B."/>
            <person name="Ruan Y."/>
            <person name="Salzberg S.L."/>
            <person name="Sandelin A."/>
            <person name="Schneider C."/>
            <person name="Schoenbach C."/>
            <person name="Sekiguchi K."/>
            <person name="Semple C.A."/>
            <person name="Seno S."/>
            <person name="Sessa L."/>
            <person name="Sheng Y."/>
            <person name="Shibata Y."/>
            <person name="Shimada H."/>
            <person name="Shimada K."/>
            <person name="Silva D."/>
            <person name="Sinclair B."/>
            <person name="Sperling S."/>
            <person name="Stupka E."/>
            <person name="Sugiura K."/>
            <person name="Sultana R."/>
            <person name="Takenaka Y."/>
            <person name="Taki K."/>
            <person name="Tammoja K."/>
            <person name="Tan S.L."/>
            <person name="Tang S."/>
            <person name="Taylor M.S."/>
            <person name="Tegner J."/>
            <person name="Teichmann S.A."/>
            <person name="Ueda H.R."/>
            <person name="van Nimwegen E."/>
            <person name="Verardo R."/>
            <person name="Wei C.L."/>
            <person name="Yagi K."/>
            <person name="Yamanishi H."/>
            <person name="Zabarovsky E."/>
            <person name="Zhu S."/>
            <person name="Zimmer A."/>
            <person name="Hide W."/>
            <person name="Bult C."/>
            <person name="Grimmond S.M."/>
            <person name="Teasdale R.D."/>
            <person name="Liu E.T."/>
            <person name="Brusic V."/>
            <person name="Quackenbush J."/>
            <person name="Wahlestedt C."/>
            <person name="Mattick J.S."/>
            <person name="Hume D.A."/>
            <person name="Kai C."/>
            <person name="Sasaki D."/>
            <person name="Tomaru Y."/>
            <person name="Fukuda S."/>
            <person name="Kanamori-Katayama M."/>
            <person name="Suzuki M."/>
            <person name="Aoki J."/>
            <person name="Arakawa T."/>
            <person name="Iida J."/>
            <person name="Imamura K."/>
            <person name="Itoh M."/>
            <person name="Kato T."/>
            <person name="Kawaji H."/>
            <person name="Kawagashira N."/>
            <person name="Kawashima T."/>
            <person name="Kojima M."/>
            <person name="Kondo S."/>
            <person name="Konno H."/>
            <person name="Nakano K."/>
            <person name="Ninomiya N."/>
            <person name="Nishio T."/>
            <person name="Okada M."/>
            <person name="Plessy C."/>
            <person name="Shibata K."/>
            <person name="Shiraki T."/>
            <person name="Suzuki S."/>
            <person name="Tagami M."/>
            <person name="Waki K."/>
            <person name="Watahiki A."/>
            <person name="Okamura-Oho Y."/>
            <person name="Suzuki H."/>
            <person name="Kawai J."/>
            <person name="Hayashizaki Y."/>
        </authorList>
    </citation>
    <scope>NUCLEOTIDE SEQUENCE [LARGE SCALE MRNA]</scope>
    <source>
        <strain>C57BL/6J</strain>
        <tissue>Gall bladder</tissue>
    </source>
</reference>
<reference key="3">
    <citation type="journal article" date="2004" name="Genome Res.">
        <title>The status, quality, and expansion of the NIH full-length cDNA project: the Mammalian Gene Collection (MGC).</title>
        <authorList>
            <consortium name="The MGC Project Team"/>
        </authorList>
    </citation>
    <scope>NUCLEOTIDE SEQUENCE [LARGE SCALE MRNA]</scope>
    <source>
        <tissue>Brain</tissue>
    </source>
</reference>
<protein>
    <recommendedName>
        <fullName>Neuropeptide Y receptor type 4</fullName>
        <shortName>NPY4-R</shortName>
    </recommendedName>
    <alternativeName>
        <fullName>NPYR-D</fullName>
    </alternativeName>
    <alternativeName>
        <fullName>Pancreatic polypeptide receptor 1</fullName>
        <shortName>PP1</shortName>
    </alternativeName>
</protein>
<sequence length="375" mass="42648">MNTSHFLAPLFPGSLQGKNGTNPLDSPYNFSDGCQDSAELLAFIITTYSIETILGVLGNLCLIFVTTRQKEKSNVTNLLIANLAFSDFLMCLICQPLTVTYTIMDYWIFGEVLCKMLTFIQCMSVTVSILSLVLVALERHQLIINPTGWKPSIFQAYLGIVVIWFVSCFLSLPFLANSTLNDLFHYNHSKVVEFLEDKVVCFVSWSSDHHRLIYTTFLLLFQYCIPLAFILVCYIRIYQRLQRQKHVFHAHACSSRAGQMKRINSMLMTMVTAFAVLWLPLHVFNTLEDWYQEAIPACHGNLIFLMCHLLAMASTCVNPFIYGFLNINFKKDIKALVLTCHCRSPRGESEHLPLSTVHTDLSKGSMRMGSKSNFI</sequence>
<feature type="chain" id="PRO_0000069936" description="Neuropeptide Y receptor type 4">
    <location>
        <begin position="1"/>
        <end position="375"/>
    </location>
</feature>
<feature type="topological domain" description="Extracellular" evidence="1">
    <location>
        <begin position="1"/>
        <end position="39"/>
    </location>
</feature>
<feature type="transmembrane region" description="Helical; Name=1" evidence="1">
    <location>
        <begin position="40"/>
        <end position="60"/>
    </location>
</feature>
<feature type="topological domain" description="Cytoplasmic" evidence="1">
    <location>
        <begin position="61"/>
        <end position="78"/>
    </location>
</feature>
<feature type="transmembrane region" description="Helical; Name=2" evidence="1">
    <location>
        <begin position="79"/>
        <end position="99"/>
    </location>
</feature>
<feature type="topological domain" description="Extracellular" evidence="1">
    <location>
        <begin position="100"/>
        <end position="116"/>
    </location>
</feature>
<feature type="transmembrane region" description="Helical; Name=3" evidence="1">
    <location>
        <begin position="117"/>
        <end position="137"/>
    </location>
</feature>
<feature type="topological domain" description="Cytoplasmic" evidence="1">
    <location>
        <begin position="138"/>
        <end position="155"/>
    </location>
</feature>
<feature type="transmembrane region" description="Helical; Name=4" evidence="1">
    <location>
        <begin position="156"/>
        <end position="176"/>
    </location>
</feature>
<feature type="topological domain" description="Extracellular" evidence="1">
    <location>
        <begin position="177"/>
        <end position="211"/>
    </location>
</feature>
<feature type="transmembrane region" description="Helical; Name=5" evidence="1">
    <location>
        <begin position="212"/>
        <end position="232"/>
    </location>
</feature>
<feature type="topological domain" description="Cytoplasmic" evidence="1">
    <location>
        <begin position="233"/>
        <end position="266"/>
    </location>
</feature>
<feature type="transmembrane region" description="Helical; Name=6" evidence="1">
    <location>
        <begin position="267"/>
        <end position="287"/>
    </location>
</feature>
<feature type="topological domain" description="Extracellular" evidence="1">
    <location>
        <begin position="288"/>
        <end position="301"/>
    </location>
</feature>
<feature type="transmembrane region" description="Helical; Name=7" evidence="1">
    <location>
        <begin position="302"/>
        <end position="322"/>
    </location>
</feature>
<feature type="topological domain" description="Cytoplasmic" evidence="1">
    <location>
        <begin position="323"/>
        <end position="375"/>
    </location>
</feature>
<feature type="lipid moiety-binding region" description="S-palmitoyl cysteine" evidence="1">
    <location>
        <position position="340"/>
    </location>
</feature>
<feature type="glycosylation site" description="N-linked (GlcNAc...) asparagine" evidence="1">
    <location>
        <position position="2"/>
    </location>
</feature>
<feature type="glycosylation site" description="N-linked (GlcNAc...) asparagine" evidence="1">
    <location>
        <position position="19"/>
    </location>
</feature>
<feature type="glycosylation site" description="N-linked (GlcNAc...) asparagine" evidence="1">
    <location>
        <position position="29"/>
    </location>
</feature>
<feature type="glycosylation site" description="N-linked (GlcNAc...) asparagine" evidence="1">
    <location>
        <position position="187"/>
    </location>
</feature>
<feature type="disulfide bond" evidence="2">
    <location>
        <begin position="114"/>
        <end position="201"/>
    </location>
</feature>
<feature type="sequence conflict" description="In Ref. 1; AAC52442." evidence="4" ref="1">
    <original>V</original>
    <variation>I</variation>
    <location>
        <position position="166"/>
    </location>
</feature>
<feature type="sequence conflict" description="In Ref. 1; AAC52442." evidence="4" ref="1">
    <original>R</original>
    <variation>Q</variation>
    <location>
        <position position="346"/>
    </location>
</feature>
<name>NPY4R_MOUSE</name>
<accession>Q61041</accession>
<accession>Q3UN46</accession>
<comment type="function">
    <text evidence="3">G protein-coupled receptor for PPY/pancreatic polypeptide/PP that is negatively coupled to cAMP (PubMed:8641440). Has much lower affinity for the NPY/neuropeptide Y and PYY/peptide YY (PubMed:8641440).</text>
</comment>
<comment type="subcellular location">
    <subcellularLocation>
        <location evidence="3">Cell membrane</location>
        <topology evidence="1">Multi-pass membrane protein</topology>
    </subcellularLocation>
</comment>
<comment type="tissue specificity">
    <text evidence="3">Heart, detected in small intestine.</text>
</comment>
<comment type="similarity">
    <text evidence="2">Belongs to the G-protein coupled receptor 1 family.</text>
</comment>
<proteinExistence type="evidence at transcript level"/>
<dbReference type="EMBL" id="U40189">
    <property type="protein sequence ID" value="AAC52442.1"/>
    <property type="molecule type" value="Genomic_DNA"/>
</dbReference>
<dbReference type="EMBL" id="AK144461">
    <property type="protein sequence ID" value="BAE25901.1"/>
    <property type="molecule type" value="mRNA"/>
</dbReference>
<dbReference type="EMBL" id="BC132395">
    <property type="protein sequence ID" value="AAI32396.1"/>
    <property type="molecule type" value="mRNA"/>
</dbReference>
<dbReference type="EMBL" id="BC145981">
    <property type="protein sequence ID" value="AAI45982.1"/>
    <property type="molecule type" value="mRNA"/>
</dbReference>
<dbReference type="CCDS" id="CCDS26933.1"/>
<dbReference type="PIR" id="S63685">
    <property type="entry name" value="S63685"/>
</dbReference>
<dbReference type="RefSeq" id="NP_032945.3">
    <property type="nucleotide sequence ID" value="NM_008919.4"/>
</dbReference>
<dbReference type="SMR" id="Q61041"/>
<dbReference type="FunCoup" id="Q61041">
    <property type="interactions" value="703"/>
</dbReference>
<dbReference type="STRING" id="10090.ENSMUSP00000056576"/>
<dbReference type="BindingDB" id="Q61041"/>
<dbReference type="ChEMBL" id="CHEMBL4105736"/>
<dbReference type="GuidetoPHARMACOLOGY" id="307"/>
<dbReference type="GlyCosmos" id="Q61041">
    <property type="glycosylation" value="4 sites, No reported glycans"/>
</dbReference>
<dbReference type="GlyGen" id="Q61041">
    <property type="glycosylation" value="4 sites"/>
</dbReference>
<dbReference type="PhosphoSitePlus" id="Q61041"/>
<dbReference type="PaxDb" id="10090-ENSMUSP00000056576"/>
<dbReference type="ProteomicsDB" id="293885"/>
<dbReference type="DNASU" id="19065"/>
<dbReference type="Ensembl" id="ENSMUST00000052164.4">
    <property type="protein sequence ID" value="ENSMUSP00000056576.4"/>
    <property type="gene ID" value="ENSMUSG00000048337.4"/>
</dbReference>
<dbReference type="GeneID" id="19065"/>
<dbReference type="KEGG" id="mmu:19065"/>
<dbReference type="UCSC" id="uc007tak.2">
    <property type="organism name" value="mouse"/>
</dbReference>
<dbReference type="AGR" id="MGI:105374"/>
<dbReference type="CTD" id="5540"/>
<dbReference type="MGI" id="MGI:105374">
    <property type="gene designation" value="Npy4r"/>
</dbReference>
<dbReference type="VEuPathDB" id="HostDB:ENSMUSG00000048337"/>
<dbReference type="eggNOG" id="KOG3656">
    <property type="taxonomic scope" value="Eukaryota"/>
</dbReference>
<dbReference type="GeneTree" id="ENSGT00940000161927"/>
<dbReference type="HOGENOM" id="CLU_009579_6_1_1"/>
<dbReference type="InParanoid" id="Q61041"/>
<dbReference type="OMA" id="FTVVYTM"/>
<dbReference type="OrthoDB" id="9046662at2759"/>
<dbReference type="PhylomeDB" id="Q61041"/>
<dbReference type="TreeFam" id="TF315303"/>
<dbReference type="Reactome" id="R-MMU-375276">
    <property type="pathway name" value="Peptide ligand-binding receptors"/>
</dbReference>
<dbReference type="Reactome" id="R-MMU-418594">
    <property type="pathway name" value="G alpha (i) signalling events"/>
</dbReference>
<dbReference type="BioGRID-ORCS" id="19065">
    <property type="hits" value="3 hits in 76 CRISPR screens"/>
</dbReference>
<dbReference type="PRO" id="PR:Q61041"/>
<dbReference type="Proteomes" id="UP000000589">
    <property type="component" value="Chromosome 14"/>
</dbReference>
<dbReference type="RNAct" id="Q61041">
    <property type="molecule type" value="protein"/>
</dbReference>
<dbReference type="Bgee" id="ENSMUSG00000048337">
    <property type="expression patterns" value="Expressed in mesodermal cell in embryo and 12 other cell types or tissues"/>
</dbReference>
<dbReference type="GO" id="GO:0005886">
    <property type="term" value="C:plasma membrane"/>
    <property type="evidence" value="ECO:0007669"/>
    <property type="project" value="UniProtKB-SubCell"/>
</dbReference>
<dbReference type="GO" id="GO:0001602">
    <property type="term" value="F:pancreatic polypeptide receptor activity"/>
    <property type="evidence" value="ECO:0000314"/>
    <property type="project" value="MGI"/>
</dbReference>
<dbReference type="GO" id="GO:0001601">
    <property type="term" value="F:peptide YY receptor activity"/>
    <property type="evidence" value="ECO:0000314"/>
    <property type="project" value="MGI"/>
</dbReference>
<dbReference type="CDD" id="cd15397">
    <property type="entry name" value="7tmA_NPY4R"/>
    <property type="match status" value="1"/>
</dbReference>
<dbReference type="FunFam" id="1.20.1070.10:FF:000062">
    <property type="entry name" value="Neuropeptide Y receptor type 1"/>
    <property type="match status" value="1"/>
</dbReference>
<dbReference type="Gene3D" id="1.20.1070.10">
    <property type="entry name" value="Rhodopsin 7-helix transmembrane proteins"/>
    <property type="match status" value="1"/>
</dbReference>
<dbReference type="InterPro" id="IPR000276">
    <property type="entry name" value="GPCR_Rhodpsn"/>
</dbReference>
<dbReference type="InterPro" id="IPR017452">
    <property type="entry name" value="GPCR_Rhodpsn_7TM"/>
</dbReference>
<dbReference type="InterPro" id="IPR001933">
    <property type="entry name" value="NPY4_rcpt"/>
</dbReference>
<dbReference type="InterPro" id="IPR000611">
    <property type="entry name" value="NPY_rcpt"/>
</dbReference>
<dbReference type="PANTHER" id="PTHR24235">
    <property type="entry name" value="NEUROPEPTIDE Y RECEPTOR"/>
    <property type="match status" value="1"/>
</dbReference>
<dbReference type="PANTHER" id="PTHR24235:SF25">
    <property type="entry name" value="NEUROPEPTIDE Y RECEPTOR TYPE 4-RELATED"/>
    <property type="match status" value="1"/>
</dbReference>
<dbReference type="Pfam" id="PF00001">
    <property type="entry name" value="7tm_1"/>
    <property type="match status" value="1"/>
</dbReference>
<dbReference type="PRINTS" id="PR00237">
    <property type="entry name" value="GPCRRHODOPSN"/>
</dbReference>
<dbReference type="PRINTS" id="PR01015">
    <property type="entry name" value="NRPEPTIDEY4R"/>
</dbReference>
<dbReference type="PRINTS" id="PR01012">
    <property type="entry name" value="NRPEPTIDEYR"/>
</dbReference>
<dbReference type="SUPFAM" id="SSF81321">
    <property type="entry name" value="Family A G protein-coupled receptor-like"/>
    <property type="match status" value="1"/>
</dbReference>
<dbReference type="PROSITE" id="PS00237">
    <property type="entry name" value="G_PROTEIN_RECEP_F1_1"/>
    <property type="match status" value="1"/>
</dbReference>
<dbReference type="PROSITE" id="PS50262">
    <property type="entry name" value="G_PROTEIN_RECEP_F1_2"/>
    <property type="match status" value="1"/>
</dbReference>
<evidence type="ECO:0000255" key="1"/>
<evidence type="ECO:0000255" key="2">
    <source>
        <dbReference type="PROSITE-ProRule" id="PRU00521"/>
    </source>
</evidence>
<evidence type="ECO:0000269" key="3">
    <source>
    </source>
</evidence>
<evidence type="ECO:0000305" key="4"/>